<reference key="1">
    <citation type="journal article" date="2001" name="J. Bacteriol.">
        <title>Genome sequence and comparative analysis of the solvent-producing bacterium Clostridium acetobutylicum.</title>
        <authorList>
            <person name="Noelling J."/>
            <person name="Breton G."/>
            <person name="Omelchenko M.V."/>
            <person name="Makarova K.S."/>
            <person name="Zeng Q."/>
            <person name="Gibson R."/>
            <person name="Lee H.M."/>
            <person name="Dubois J."/>
            <person name="Qiu D."/>
            <person name="Hitti J."/>
            <person name="Wolf Y.I."/>
            <person name="Tatusov R.L."/>
            <person name="Sabathe F."/>
            <person name="Doucette-Stamm L.A."/>
            <person name="Soucaille P."/>
            <person name="Daly M.J."/>
            <person name="Bennett G.N."/>
            <person name="Koonin E.V."/>
            <person name="Smith D.R."/>
        </authorList>
    </citation>
    <scope>NUCLEOTIDE SEQUENCE [LARGE SCALE GENOMIC DNA]</scope>
    <source>
        <strain>ATCC 824 / DSM 792 / JCM 1419 / IAM 19013 / LMG 5710 / NBRC 13948 / NRRL B-527 / VKM B-1787 / 2291 / W</strain>
    </source>
</reference>
<proteinExistence type="inferred from homology"/>
<keyword id="KW-0963">Cytoplasm</keyword>
<keyword id="KW-0227">DNA damage</keyword>
<keyword id="KW-0228">DNA excision</keyword>
<keyword id="KW-0234">DNA repair</keyword>
<keyword id="KW-0267">Excision nuclease</keyword>
<keyword id="KW-1185">Reference proteome</keyword>
<keyword id="KW-0742">SOS response</keyword>
<accession>Q97LP6</accession>
<evidence type="ECO:0000255" key="1">
    <source>
        <dbReference type="HAMAP-Rule" id="MF_00203"/>
    </source>
</evidence>
<comment type="function">
    <text evidence="1">The UvrABC repair system catalyzes the recognition and processing of DNA lesions. UvrC both incises the 5' and 3' sides of the lesion. The N-terminal half is responsible for the 3' incision and the C-terminal half is responsible for the 5' incision.</text>
</comment>
<comment type="subunit">
    <text evidence="1">Interacts with UvrB in an incision complex.</text>
</comment>
<comment type="subcellular location">
    <subcellularLocation>
        <location evidence="1">Cytoplasm</location>
    </subcellularLocation>
</comment>
<comment type="similarity">
    <text evidence="1">Belongs to the UvrC family.</text>
</comment>
<protein>
    <recommendedName>
        <fullName evidence="1">UvrABC system protein C</fullName>
        <shortName evidence="1">Protein UvrC</shortName>
    </recommendedName>
    <alternativeName>
        <fullName evidence="1">Excinuclease ABC subunit C</fullName>
    </alternativeName>
</protein>
<dbReference type="EMBL" id="AE001437">
    <property type="protein sequence ID" value="AAK78488.1"/>
    <property type="molecule type" value="Genomic_DNA"/>
</dbReference>
<dbReference type="PIR" id="E96962">
    <property type="entry name" value="E96962"/>
</dbReference>
<dbReference type="RefSeq" id="NP_347148.1">
    <property type="nucleotide sequence ID" value="NC_003030.1"/>
</dbReference>
<dbReference type="RefSeq" id="WP_010963830.1">
    <property type="nucleotide sequence ID" value="NC_003030.1"/>
</dbReference>
<dbReference type="SMR" id="Q97LP6"/>
<dbReference type="STRING" id="272562.CA_C0508"/>
<dbReference type="GeneID" id="44997017"/>
<dbReference type="KEGG" id="cac:CA_C0508"/>
<dbReference type="PATRIC" id="fig|272562.8.peg.707"/>
<dbReference type="eggNOG" id="COG0322">
    <property type="taxonomic scope" value="Bacteria"/>
</dbReference>
<dbReference type="HOGENOM" id="CLU_014841_3_2_9"/>
<dbReference type="OrthoDB" id="9804933at2"/>
<dbReference type="Proteomes" id="UP000000814">
    <property type="component" value="Chromosome"/>
</dbReference>
<dbReference type="GO" id="GO:0005737">
    <property type="term" value="C:cytoplasm"/>
    <property type="evidence" value="ECO:0007669"/>
    <property type="project" value="UniProtKB-SubCell"/>
</dbReference>
<dbReference type="GO" id="GO:0009380">
    <property type="term" value="C:excinuclease repair complex"/>
    <property type="evidence" value="ECO:0007669"/>
    <property type="project" value="InterPro"/>
</dbReference>
<dbReference type="GO" id="GO:0003677">
    <property type="term" value="F:DNA binding"/>
    <property type="evidence" value="ECO:0007669"/>
    <property type="project" value="UniProtKB-UniRule"/>
</dbReference>
<dbReference type="GO" id="GO:0009381">
    <property type="term" value="F:excinuclease ABC activity"/>
    <property type="evidence" value="ECO:0007669"/>
    <property type="project" value="UniProtKB-UniRule"/>
</dbReference>
<dbReference type="GO" id="GO:0006289">
    <property type="term" value="P:nucleotide-excision repair"/>
    <property type="evidence" value="ECO:0007669"/>
    <property type="project" value="UniProtKB-UniRule"/>
</dbReference>
<dbReference type="GO" id="GO:0009432">
    <property type="term" value="P:SOS response"/>
    <property type="evidence" value="ECO:0007669"/>
    <property type="project" value="UniProtKB-UniRule"/>
</dbReference>
<dbReference type="CDD" id="cd10434">
    <property type="entry name" value="GIY-YIG_UvrC_Cho"/>
    <property type="match status" value="1"/>
</dbReference>
<dbReference type="FunFam" id="3.40.1440.10:FF:000001">
    <property type="entry name" value="UvrABC system protein C"/>
    <property type="match status" value="1"/>
</dbReference>
<dbReference type="Gene3D" id="1.10.150.20">
    <property type="entry name" value="5' to 3' exonuclease, C-terminal subdomain"/>
    <property type="match status" value="1"/>
</dbReference>
<dbReference type="Gene3D" id="3.40.1440.10">
    <property type="entry name" value="GIY-YIG endonuclease"/>
    <property type="match status" value="1"/>
</dbReference>
<dbReference type="Gene3D" id="4.10.860.10">
    <property type="entry name" value="UVR domain"/>
    <property type="match status" value="1"/>
</dbReference>
<dbReference type="Gene3D" id="3.30.420.340">
    <property type="entry name" value="UvrC, RNAse H endonuclease domain"/>
    <property type="match status" value="1"/>
</dbReference>
<dbReference type="HAMAP" id="MF_00203">
    <property type="entry name" value="UvrC"/>
    <property type="match status" value="1"/>
</dbReference>
<dbReference type="InterPro" id="IPR041663">
    <property type="entry name" value="DisA/LigA_HHH"/>
</dbReference>
<dbReference type="InterPro" id="IPR000305">
    <property type="entry name" value="GIY-YIG_endonuc"/>
</dbReference>
<dbReference type="InterPro" id="IPR035901">
    <property type="entry name" value="GIY-YIG_endonuc_sf"/>
</dbReference>
<dbReference type="InterPro" id="IPR047296">
    <property type="entry name" value="GIY-YIG_UvrC_Cho"/>
</dbReference>
<dbReference type="InterPro" id="IPR010994">
    <property type="entry name" value="RuvA_2-like"/>
</dbReference>
<dbReference type="InterPro" id="IPR001943">
    <property type="entry name" value="UVR_dom"/>
</dbReference>
<dbReference type="InterPro" id="IPR036876">
    <property type="entry name" value="UVR_dom_sf"/>
</dbReference>
<dbReference type="InterPro" id="IPR050066">
    <property type="entry name" value="UvrABC_protein_C"/>
</dbReference>
<dbReference type="InterPro" id="IPR004791">
    <property type="entry name" value="UvrC"/>
</dbReference>
<dbReference type="InterPro" id="IPR001162">
    <property type="entry name" value="UvrC_RNase_H_dom"/>
</dbReference>
<dbReference type="InterPro" id="IPR038476">
    <property type="entry name" value="UvrC_RNase_H_dom_sf"/>
</dbReference>
<dbReference type="NCBIfam" id="NF001824">
    <property type="entry name" value="PRK00558.1-5"/>
    <property type="match status" value="1"/>
</dbReference>
<dbReference type="NCBIfam" id="TIGR00194">
    <property type="entry name" value="uvrC"/>
    <property type="match status" value="1"/>
</dbReference>
<dbReference type="PANTHER" id="PTHR30562:SF1">
    <property type="entry name" value="UVRABC SYSTEM PROTEIN C"/>
    <property type="match status" value="1"/>
</dbReference>
<dbReference type="PANTHER" id="PTHR30562">
    <property type="entry name" value="UVRC/OXIDOREDUCTASE"/>
    <property type="match status" value="1"/>
</dbReference>
<dbReference type="Pfam" id="PF01541">
    <property type="entry name" value="GIY-YIG"/>
    <property type="match status" value="1"/>
</dbReference>
<dbReference type="Pfam" id="PF12826">
    <property type="entry name" value="HHH_2"/>
    <property type="match status" value="1"/>
</dbReference>
<dbReference type="Pfam" id="PF02151">
    <property type="entry name" value="UVR"/>
    <property type="match status" value="1"/>
</dbReference>
<dbReference type="Pfam" id="PF22920">
    <property type="entry name" value="UvrC_RNaseH"/>
    <property type="match status" value="1"/>
</dbReference>
<dbReference type="Pfam" id="PF08459">
    <property type="entry name" value="UvrC_RNaseH_dom"/>
    <property type="match status" value="1"/>
</dbReference>
<dbReference type="SMART" id="SM00465">
    <property type="entry name" value="GIYc"/>
    <property type="match status" value="1"/>
</dbReference>
<dbReference type="SUPFAM" id="SSF46600">
    <property type="entry name" value="C-terminal UvrC-binding domain of UvrB"/>
    <property type="match status" value="1"/>
</dbReference>
<dbReference type="SUPFAM" id="SSF82771">
    <property type="entry name" value="GIY-YIG endonuclease"/>
    <property type="match status" value="1"/>
</dbReference>
<dbReference type="SUPFAM" id="SSF47781">
    <property type="entry name" value="RuvA domain 2-like"/>
    <property type="match status" value="1"/>
</dbReference>
<dbReference type="PROSITE" id="PS50164">
    <property type="entry name" value="GIY_YIG"/>
    <property type="match status" value="1"/>
</dbReference>
<dbReference type="PROSITE" id="PS50151">
    <property type="entry name" value="UVR"/>
    <property type="match status" value="1"/>
</dbReference>
<dbReference type="PROSITE" id="PS50165">
    <property type="entry name" value="UVRC"/>
    <property type="match status" value="1"/>
</dbReference>
<feature type="chain" id="PRO_0000138297" description="UvrABC system protein C">
    <location>
        <begin position="1"/>
        <end position="623"/>
    </location>
</feature>
<feature type="domain" description="GIY-YIG" evidence="1">
    <location>
        <begin position="13"/>
        <end position="92"/>
    </location>
</feature>
<feature type="domain" description="UVR" evidence="1">
    <location>
        <begin position="204"/>
        <end position="239"/>
    </location>
</feature>
<gene>
    <name evidence="1" type="primary">uvrC</name>
    <name type="ordered locus">CA_C0508</name>
</gene>
<name>UVRC_CLOAB</name>
<sequence>MFDFEYQLKNLPDKPGVYIMKNSLGEVIYVGKAKILKNRVRQYFRNSKNHSEKVKAMVKNISEFEYIVTDSEIEALILECNLIKKYKPRYNILLKDDKHYPFIKVTMNEDFPRIIVTRNMVKDGSKYFGPYPDVSAVHETVDLMRRIFPIRTCKKYIKENGENIRPCLNYHIKRCNAPCAGLISKEEYGEIIKKAVGLISGKNNDIIRELKEEMEKASMNLDFEKAADLRDKMLAAQKVTEKQKIIIGNFENEDYISLYSDEKDSCVQVFFLREGKIVGREHFIVENTAGENEGDIIGEFIKEFYSGTAYVPKSIYASAGEDLNLLENWLTMKRGSKVEIKIPQKGEKKDIIEMVKRNSKITLEKFKIKLLSDKRLNENILIEMTEVIGLEEVPHRIEAYDISNIQGVDSVGSMIVFEEGKPKNSDYRRFKIKTVKGANDYDSMREILTRRFKHGLEEVNSIVNKNLSLSAGKFCVFPDLILMDGGKGQVNIALEVLKEFNIDIPVCGMVKDDRHNTRGIIYNNNEIDIKSNRKIINFVTRVQDEVHRFAITYHRSLRDKRVLHSVLDDIPYIGEKRRKALLKHFGSIENIKKATYEELMKTPSIDKKAAESIVSYFRGRKGE</sequence>
<organism>
    <name type="scientific">Clostridium acetobutylicum (strain ATCC 824 / DSM 792 / JCM 1419 / IAM 19013 / LMG 5710 / NBRC 13948 / NRRL B-527 / VKM B-1787 / 2291 / W)</name>
    <dbReference type="NCBI Taxonomy" id="272562"/>
    <lineage>
        <taxon>Bacteria</taxon>
        <taxon>Bacillati</taxon>
        <taxon>Bacillota</taxon>
        <taxon>Clostridia</taxon>
        <taxon>Eubacteriales</taxon>
        <taxon>Clostridiaceae</taxon>
        <taxon>Clostridium</taxon>
    </lineage>
</organism>